<organism>
    <name type="scientific">Haemophilus influenzae (strain PittGG)</name>
    <dbReference type="NCBI Taxonomy" id="374931"/>
    <lineage>
        <taxon>Bacteria</taxon>
        <taxon>Pseudomonadati</taxon>
        <taxon>Pseudomonadota</taxon>
        <taxon>Gammaproteobacteria</taxon>
        <taxon>Pasteurellales</taxon>
        <taxon>Pasteurellaceae</taxon>
        <taxon>Haemophilus</taxon>
    </lineage>
</organism>
<feature type="chain" id="PRO_0000385964" description="GTPase Obg">
    <location>
        <begin position="1"/>
        <end position="403"/>
    </location>
</feature>
<feature type="domain" description="Obg" evidence="2">
    <location>
        <begin position="1"/>
        <end position="159"/>
    </location>
</feature>
<feature type="domain" description="OBG-type G" evidence="1">
    <location>
        <begin position="160"/>
        <end position="333"/>
    </location>
</feature>
<feature type="region of interest" description="Disordered" evidence="3">
    <location>
        <begin position="364"/>
        <end position="403"/>
    </location>
</feature>
<feature type="compositionally biased region" description="Acidic residues" evidence="3">
    <location>
        <begin position="365"/>
        <end position="397"/>
    </location>
</feature>
<feature type="binding site" evidence="1">
    <location>
        <begin position="166"/>
        <end position="173"/>
    </location>
    <ligand>
        <name>GTP</name>
        <dbReference type="ChEBI" id="CHEBI:37565"/>
    </ligand>
</feature>
<feature type="binding site" evidence="1">
    <location>
        <position position="173"/>
    </location>
    <ligand>
        <name>Mg(2+)</name>
        <dbReference type="ChEBI" id="CHEBI:18420"/>
    </ligand>
</feature>
<feature type="binding site" evidence="1">
    <location>
        <begin position="191"/>
        <end position="195"/>
    </location>
    <ligand>
        <name>GTP</name>
        <dbReference type="ChEBI" id="CHEBI:37565"/>
    </ligand>
</feature>
<feature type="binding site" evidence="1">
    <location>
        <position position="193"/>
    </location>
    <ligand>
        <name>Mg(2+)</name>
        <dbReference type="ChEBI" id="CHEBI:18420"/>
    </ligand>
</feature>
<feature type="binding site" evidence="1">
    <location>
        <begin position="213"/>
        <end position="216"/>
    </location>
    <ligand>
        <name>GTP</name>
        <dbReference type="ChEBI" id="CHEBI:37565"/>
    </ligand>
</feature>
<feature type="binding site" evidence="1">
    <location>
        <begin position="283"/>
        <end position="286"/>
    </location>
    <ligand>
        <name>GTP</name>
        <dbReference type="ChEBI" id="CHEBI:37565"/>
    </ligand>
</feature>
<feature type="binding site" evidence="1">
    <location>
        <begin position="314"/>
        <end position="316"/>
    </location>
    <ligand>
        <name>GTP</name>
        <dbReference type="ChEBI" id="CHEBI:37565"/>
    </ligand>
</feature>
<reference key="1">
    <citation type="journal article" date="2007" name="Genome Biol.">
        <title>Characterization and modeling of the Haemophilus influenzae core and supragenomes based on the complete genomic sequences of Rd and 12 clinical nontypeable strains.</title>
        <authorList>
            <person name="Hogg J.S."/>
            <person name="Hu F.Z."/>
            <person name="Janto B."/>
            <person name="Boissy R."/>
            <person name="Hayes J."/>
            <person name="Keefe R."/>
            <person name="Post J.C."/>
            <person name="Ehrlich G.D."/>
        </authorList>
    </citation>
    <scope>NUCLEOTIDE SEQUENCE [LARGE SCALE GENOMIC DNA]</scope>
    <source>
        <strain>PittGG</strain>
    </source>
</reference>
<gene>
    <name evidence="1" type="primary">obg</name>
    <name type="ordered locus">CGSHiGG_07925</name>
</gene>
<comment type="function">
    <text evidence="1">An essential GTPase which binds GTP, GDP and possibly (p)ppGpp with moderate affinity, with high nucleotide exchange rates and a fairly low GTP hydrolysis rate. Plays a role in control of the cell cycle, stress response, ribosome biogenesis and in those bacteria that undergo differentiation, in morphogenesis control.</text>
</comment>
<comment type="cofactor">
    <cofactor evidence="1">
        <name>Mg(2+)</name>
        <dbReference type="ChEBI" id="CHEBI:18420"/>
    </cofactor>
</comment>
<comment type="subunit">
    <text evidence="1">Monomer.</text>
</comment>
<comment type="subcellular location">
    <subcellularLocation>
        <location evidence="1">Cytoplasm</location>
    </subcellularLocation>
</comment>
<comment type="similarity">
    <text evidence="1">Belongs to the TRAFAC class OBG-HflX-like GTPase superfamily. OBG GTPase family.</text>
</comment>
<accession>A5UI23</accession>
<evidence type="ECO:0000255" key="1">
    <source>
        <dbReference type="HAMAP-Rule" id="MF_01454"/>
    </source>
</evidence>
<evidence type="ECO:0000255" key="2">
    <source>
        <dbReference type="PROSITE-ProRule" id="PRU01231"/>
    </source>
</evidence>
<evidence type="ECO:0000256" key="3">
    <source>
        <dbReference type="SAM" id="MobiDB-lite"/>
    </source>
</evidence>
<sequence length="403" mass="45091">MKFIDESLIRIEAGDGGNGCVSFRREKFIPKGGPDGGDGGDGGDVYLQADENLNTLIDYRFNKRFAAERGENGRSSDCTGRRGKDIILPVPVGTRAIDNDTKETLGDLTQHGQKMLVAKGGYHGLGNTRFKSSVNRAPRQKTMGTPGEKRDLLLELMLLADVGMLGFPNAGKSTFIRAVSAAKPKVADYPFTTLVPSLGVVKVDDSHSFVVADIPGLIEGAADGAGLGIRFLKHLERCRVLIHLVDIAPIDGSNPADNVAIIESELFQYSEKLSEKPRWLVFNKIDTMSDEEAEERVREITEQLGWEEDYYLISAATGKNVPPLCRDIMDFIIANPREAETQQVAPEEIKFKWEDYHQEQLAEYQFDDDEDWDDDWTEEDDDEDWDDDWSEEDDEGIEFIYKP</sequence>
<name>OBG_HAEIG</name>
<protein>
    <recommendedName>
        <fullName evidence="1">GTPase Obg</fullName>
        <ecNumber evidence="1">3.6.5.-</ecNumber>
    </recommendedName>
    <alternativeName>
        <fullName evidence="1">GTP-binding protein Obg</fullName>
    </alternativeName>
</protein>
<dbReference type="EC" id="3.6.5.-" evidence="1"/>
<dbReference type="EMBL" id="CP000672">
    <property type="protein sequence ID" value="ABR00429.1"/>
    <property type="molecule type" value="Genomic_DNA"/>
</dbReference>
<dbReference type="SMR" id="A5UI23"/>
<dbReference type="KEGG" id="hiq:CGSHiGG_07925"/>
<dbReference type="HOGENOM" id="CLU_011747_2_0_6"/>
<dbReference type="Proteomes" id="UP000001990">
    <property type="component" value="Chromosome"/>
</dbReference>
<dbReference type="GO" id="GO:0005737">
    <property type="term" value="C:cytoplasm"/>
    <property type="evidence" value="ECO:0007669"/>
    <property type="project" value="UniProtKB-SubCell"/>
</dbReference>
<dbReference type="GO" id="GO:0005525">
    <property type="term" value="F:GTP binding"/>
    <property type="evidence" value="ECO:0007669"/>
    <property type="project" value="UniProtKB-UniRule"/>
</dbReference>
<dbReference type="GO" id="GO:0003924">
    <property type="term" value="F:GTPase activity"/>
    <property type="evidence" value="ECO:0007669"/>
    <property type="project" value="UniProtKB-UniRule"/>
</dbReference>
<dbReference type="GO" id="GO:0000287">
    <property type="term" value="F:magnesium ion binding"/>
    <property type="evidence" value="ECO:0007669"/>
    <property type="project" value="InterPro"/>
</dbReference>
<dbReference type="GO" id="GO:0042254">
    <property type="term" value="P:ribosome biogenesis"/>
    <property type="evidence" value="ECO:0007669"/>
    <property type="project" value="UniProtKB-UniRule"/>
</dbReference>
<dbReference type="CDD" id="cd01898">
    <property type="entry name" value="Obg"/>
    <property type="match status" value="1"/>
</dbReference>
<dbReference type="FunFam" id="2.70.210.12:FF:000001">
    <property type="entry name" value="GTPase Obg"/>
    <property type="match status" value="1"/>
</dbReference>
<dbReference type="FunFam" id="3.40.50.300:FF:000185">
    <property type="entry name" value="GTPase Obg"/>
    <property type="match status" value="1"/>
</dbReference>
<dbReference type="Gene3D" id="2.70.210.12">
    <property type="entry name" value="GTP1/OBG domain"/>
    <property type="match status" value="1"/>
</dbReference>
<dbReference type="Gene3D" id="3.40.50.300">
    <property type="entry name" value="P-loop containing nucleotide triphosphate hydrolases"/>
    <property type="match status" value="1"/>
</dbReference>
<dbReference type="HAMAP" id="MF_01454">
    <property type="entry name" value="GTPase_Obg"/>
    <property type="match status" value="1"/>
</dbReference>
<dbReference type="InterPro" id="IPR031167">
    <property type="entry name" value="G_OBG"/>
</dbReference>
<dbReference type="InterPro" id="IPR006073">
    <property type="entry name" value="GTP-bd"/>
</dbReference>
<dbReference type="InterPro" id="IPR014100">
    <property type="entry name" value="GTP-bd_Obg/CgtA"/>
</dbReference>
<dbReference type="InterPro" id="IPR006074">
    <property type="entry name" value="GTP1-OBG_CS"/>
</dbReference>
<dbReference type="InterPro" id="IPR006169">
    <property type="entry name" value="GTP1_OBG_dom"/>
</dbReference>
<dbReference type="InterPro" id="IPR036726">
    <property type="entry name" value="GTP1_OBG_dom_sf"/>
</dbReference>
<dbReference type="InterPro" id="IPR045086">
    <property type="entry name" value="OBG_GTPase"/>
</dbReference>
<dbReference type="InterPro" id="IPR027417">
    <property type="entry name" value="P-loop_NTPase"/>
</dbReference>
<dbReference type="NCBIfam" id="TIGR02729">
    <property type="entry name" value="Obg_CgtA"/>
    <property type="match status" value="1"/>
</dbReference>
<dbReference type="NCBIfam" id="NF008955">
    <property type="entry name" value="PRK12297.1"/>
    <property type="match status" value="1"/>
</dbReference>
<dbReference type="NCBIfam" id="NF008956">
    <property type="entry name" value="PRK12299.1"/>
    <property type="match status" value="1"/>
</dbReference>
<dbReference type="PANTHER" id="PTHR11702">
    <property type="entry name" value="DEVELOPMENTALLY REGULATED GTP-BINDING PROTEIN-RELATED"/>
    <property type="match status" value="1"/>
</dbReference>
<dbReference type="PANTHER" id="PTHR11702:SF31">
    <property type="entry name" value="MITOCHONDRIAL RIBOSOME-ASSOCIATED GTPASE 2"/>
    <property type="match status" value="1"/>
</dbReference>
<dbReference type="Pfam" id="PF01018">
    <property type="entry name" value="GTP1_OBG"/>
    <property type="match status" value="1"/>
</dbReference>
<dbReference type="Pfam" id="PF01926">
    <property type="entry name" value="MMR_HSR1"/>
    <property type="match status" value="1"/>
</dbReference>
<dbReference type="PIRSF" id="PIRSF002401">
    <property type="entry name" value="GTP_bd_Obg/CgtA"/>
    <property type="match status" value="1"/>
</dbReference>
<dbReference type="PRINTS" id="PR00326">
    <property type="entry name" value="GTP1OBG"/>
</dbReference>
<dbReference type="SUPFAM" id="SSF82051">
    <property type="entry name" value="Obg GTP-binding protein N-terminal domain"/>
    <property type="match status" value="1"/>
</dbReference>
<dbReference type="SUPFAM" id="SSF52540">
    <property type="entry name" value="P-loop containing nucleoside triphosphate hydrolases"/>
    <property type="match status" value="1"/>
</dbReference>
<dbReference type="PROSITE" id="PS51710">
    <property type="entry name" value="G_OBG"/>
    <property type="match status" value="1"/>
</dbReference>
<dbReference type="PROSITE" id="PS00905">
    <property type="entry name" value="GTP1_OBG"/>
    <property type="match status" value="1"/>
</dbReference>
<dbReference type="PROSITE" id="PS51883">
    <property type="entry name" value="OBG"/>
    <property type="match status" value="1"/>
</dbReference>
<proteinExistence type="inferred from homology"/>
<keyword id="KW-0963">Cytoplasm</keyword>
<keyword id="KW-0342">GTP-binding</keyword>
<keyword id="KW-0378">Hydrolase</keyword>
<keyword id="KW-0460">Magnesium</keyword>
<keyword id="KW-0479">Metal-binding</keyword>
<keyword id="KW-0547">Nucleotide-binding</keyword>